<accession>Q8NEG4</accession>
<accession>Q96FD6</accession>
<organism>
    <name type="scientific">Homo sapiens</name>
    <name type="common">Human</name>
    <dbReference type="NCBI Taxonomy" id="9606"/>
    <lineage>
        <taxon>Eukaryota</taxon>
        <taxon>Metazoa</taxon>
        <taxon>Chordata</taxon>
        <taxon>Craniata</taxon>
        <taxon>Vertebrata</taxon>
        <taxon>Euteleostomi</taxon>
        <taxon>Mammalia</taxon>
        <taxon>Eutheria</taxon>
        <taxon>Euarchontoglires</taxon>
        <taxon>Primates</taxon>
        <taxon>Haplorrhini</taxon>
        <taxon>Catarrhini</taxon>
        <taxon>Hominidae</taxon>
        <taxon>Homo</taxon>
    </lineage>
</organism>
<gene>
    <name type="primary">FAM83F</name>
</gene>
<dbReference type="EMBL" id="Z83847">
    <property type="status" value="NOT_ANNOTATED_CDS"/>
    <property type="molecule type" value="Genomic_DNA"/>
</dbReference>
<dbReference type="EMBL" id="Z82206">
    <property type="status" value="NOT_ANNOTATED_CDS"/>
    <property type="molecule type" value="Genomic_DNA"/>
</dbReference>
<dbReference type="EMBL" id="CH471095">
    <property type="protein sequence ID" value="EAW60365.1"/>
    <property type="molecule type" value="Genomic_DNA"/>
</dbReference>
<dbReference type="EMBL" id="BC011204">
    <property type="protein sequence ID" value="AAH11204.1"/>
    <property type="molecule type" value="mRNA"/>
</dbReference>
<dbReference type="EMBL" id="BC031099">
    <property type="protein sequence ID" value="AAH31099.1"/>
    <property type="molecule type" value="mRNA"/>
</dbReference>
<dbReference type="CCDS" id="CCDS14000.2">
    <molecule id="Q8NEG4-1"/>
</dbReference>
<dbReference type="RefSeq" id="NP_612444.2">
    <molecule id="Q8NEG4-1"/>
    <property type="nucleotide sequence ID" value="NM_138435.4"/>
</dbReference>
<dbReference type="SMR" id="Q8NEG4"/>
<dbReference type="BioGRID" id="125262">
    <property type="interactions" value="45"/>
</dbReference>
<dbReference type="FunCoup" id="Q8NEG4">
    <property type="interactions" value="17"/>
</dbReference>
<dbReference type="IntAct" id="Q8NEG4">
    <property type="interactions" value="29"/>
</dbReference>
<dbReference type="STRING" id="9606.ENSP00000330432"/>
<dbReference type="iPTMnet" id="Q8NEG4"/>
<dbReference type="PhosphoSitePlus" id="Q8NEG4"/>
<dbReference type="BioMuta" id="FAM83F"/>
<dbReference type="DMDM" id="74760207"/>
<dbReference type="jPOST" id="Q8NEG4"/>
<dbReference type="MassIVE" id="Q8NEG4"/>
<dbReference type="PaxDb" id="9606-ENSP00000330432"/>
<dbReference type="PeptideAtlas" id="Q8NEG4"/>
<dbReference type="ProteomicsDB" id="73162">
    <molecule id="Q8NEG4-1"/>
</dbReference>
<dbReference type="ProteomicsDB" id="73163">
    <molecule id="Q8NEG4-2"/>
</dbReference>
<dbReference type="Pumba" id="Q8NEG4"/>
<dbReference type="Antibodypedia" id="26692">
    <property type="antibodies" value="82 antibodies from 17 providers"/>
</dbReference>
<dbReference type="DNASU" id="113828"/>
<dbReference type="Ensembl" id="ENST00000333407.11">
    <molecule id="Q8NEG4-1"/>
    <property type="protein sequence ID" value="ENSP00000330432.5"/>
    <property type="gene ID" value="ENSG00000133477.17"/>
</dbReference>
<dbReference type="Ensembl" id="ENST00000473717.1">
    <molecule id="Q8NEG4-2"/>
    <property type="protein sequence ID" value="ENSP00000476600.1"/>
    <property type="gene ID" value="ENSG00000133477.17"/>
</dbReference>
<dbReference type="GeneID" id="113828"/>
<dbReference type="KEGG" id="hsa:113828"/>
<dbReference type="MANE-Select" id="ENST00000333407.11">
    <property type="protein sequence ID" value="ENSP00000330432.5"/>
    <property type="RefSeq nucleotide sequence ID" value="NM_138435.4"/>
    <property type="RefSeq protein sequence ID" value="NP_612444.2"/>
</dbReference>
<dbReference type="UCSC" id="uc021wqa.2">
    <molecule id="Q8NEG4-1"/>
    <property type="organism name" value="human"/>
</dbReference>
<dbReference type="AGR" id="HGNC:25148"/>
<dbReference type="CTD" id="113828"/>
<dbReference type="DisGeNET" id="113828"/>
<dbReference type="GeneCards" id="FAM83F"/>
<dbReference type="HGNC" id="HGNC:25148">
    <property type="gene designation" value="FAM83F"/>
</dbReference>
<dbReference type="HPA" id="ENSG00000133477">
    <property type="expression patterns" value="Tissue enhanced (esophagus, testis)"/>
</dbReference>
<dbReference type="neXtProt" id="NX_Q8NEG4"/>
<dbReference type="OpenTargets" id="ENSG00000133477"/>
<dbReference type="PharmGKB" id="PA142671853"/>
<dbReference type="VEuPathDB" id="HostDB:ENSG00000133477"/>
<dbReference type="eggNOG" id="ENOG502QPW1">
    <property type="taxonomic scope" value="Eukaryota"/>
</dbReference>
<dbReference type="GeneTree" id="ENSGT00940000160998"/>
<dbReference type="HOGENOM" id="CLU_019056_2_0_1"/>
<dbReference type="InParanoid" id="Q8NEG4"/>
<dbReference type="OMA" id="HVEMFDI"/>
<dbReference type="OrthoDB" id="6103632at2759"/>
<dbReference type="PAN-GO" id="Q8NEG4">
    <property type="GO annotations" value="2 GO annotations based on evolutionary models"/>
</dbReference>
<dbReference type="PhylomeDB" id="Q8NEG4"/>
<dbReference type="TreeFam" id="TF330777"/>
<dbReference type="PathwayCommons" id="Q8NEG4"/>
<dbReference type="SignaLink" id="Q8NEG4"/>
<dbReference type="SIGNOR" id="Q8NEG4"/>
<dbReference type="BioGRID-ORCS" id="113828">
    <property type="hits" value="10 hits in 1146 CRISPR screens"/>
</dbReference>
<dbReference type="ChiTaRS" id="FAM83F">
    <property type="organism name" value="human"/>
</dbReference>
<dbReference type="GenomeRNAi" id="113828"/>
<dbReference type="Pharos" id="Q8NEG4">
    <property type="development level" value="Tbio"/>
</dbReference>
<dbReference type="PRO" id="PR:Q8NEG4"/>
<dbReference type="Proteomes" id="UP000005640">
    <property type="component" value="Chromosome 22"/>
</dbReference>
<dbReference type="RNAct" id="Q8NEG4">
    <property type="molecule type" value="protein"/>
</dbReference>
<dbReference type="Bgee" id="ENSG00000133477">
    <property type="expression patterns" value="Expressed in left testis and 144 other cell types or tissues"/>
</dbReference>
<dbReference type="GO" id="GO:0019901">
    <property type="term" value="F:protein kinase binding"/>
    <property type="evidence" value="ECO:0000318"/>
    <property type="project" value="GO_Central"/>
</dbReference>
<dbReference type="GO" id="GO:0007165">
    <property type="term" value="P:signal transduction"/>
    <property type="evidence" value="ECO:0000318"/>
    <property type="project" value="GO_Central"/>
</dbReference>
<dbReference type="CDD" id="cd09186">
    <property type="entry name" value="PLDc_FAM83F_N"/>
    <property type="match status" value="1"/>
</dbReference>
<dbReference type="Gene3D" id="3.30.870.10">
    <property type="entry name" value="Endonuclease Chain A"/>
    <property type="match status" value="1"/>
</dbReference>
<dbReference type="InterPro" id="IPR050944">
    <property type="entry name" value="FAM83"/>
</dbReference>
<dbReference type="InterPro" id="IPR012461">
    <property type="entry name" value="SACK1"/>
</dbReference>
<dbReference type="PANTHER" id="PTHR16181">
    <property type="entry name" value="PROTEIN FAM83A-RELATED"/>
    <property type="match status" value="1"/>
</dbReference>
<dbReference type="PANTHER" id="PTHR16181:SF29">
    <property type="entry name" value="PROTEIN FAM83A-RELATED"/>
    <property type="match status" value="1"/>
</dbReference>
<dbReference type="Pfam" id="PF07894">
    <property type="entry name" value="SACK1"/>
    <property type="match status" value="1"/>
</dbReference>
<dbReference type="SUPFAM" id="SSF56024">
    <property type="entry name" value="Phospholipase D/nuclease"/>
    <property type="match status" value="1"/>
</dbReference>
<proteinExistence type="evidence at protein level"/>
<sequence length="500" mass="55486">MAESQLNCLDEAHVNEKVTEAQAAFYYCERRRAALEALLGGGEQAYRERLKEEQLRDFLSSPERQALRAAWSPYEDAVPAANARGKSKAKAKAPAPAPAESGESLAYWPDRSDTEVPPLDLGWTDTGFYRGVSRVTLFTHPPKDEKAPHLKQVVRQMIQQAQKVIAVVMDLFTDGDIFQDIVDAACKRRVPVYIILDEAGVKYFLEMCQDLQLTDFRIRNIRVRSVTGVGFYMPMGRIKGTLSSRFLMVDGDKVATGSYRFTWSSSHVDRNLLLLLTGQNVEPFDTEFRELYAISEEVDLYRQLSLAGRVGLHYSSTVARKLINPKYALVSGCRHPPGEMMRWAARQQREAGGNPEGQEEGASGGESAWRLESFLKDLVTVEQVLPPVEPIPLGELSQKDGRMVSHMHRDLKPKSREAPSRNGMGEAARGEAAPARRFSSRLFSRRAKRPAAPNGMASSVSTETSEVEFLTGKRPNENSSADISGKTSPSSAKPSNCVIS</sequence>
<comment type="subunit">
    <text evidence="4">Directly interacts (via DUF1669) with CSNK1A1 and CSNK1A1L.</text>
</comment>
<comment type="interaction">
    <interactant intactId="EBI-1563144">
        <id>Q8NEG4</id>
    </interactant>
    <interactant intactId="EBI-1383726">
        <id>P48729</id>
        <label>CSNK1A1</label>
    </interactant>
    <organismsDiffer>false</organismsDiffer>
    <experiments>7</experiments>
</comment>
<comment type="subcellular location">
    <subcellularLocation>
        <location evidence="4">Cell membrane</location>
    </subcellularLocation>
</comment>
<comment type="alternative products">
    <event type="alternative splicing"/>
    <isoform>
        <id>Q8NEG4-1</id>
        <name>1</name>
        <sequence type="displayed"/>
    </isoform>
    <isoform>
        <id>Q8NEG4-2</id>
        <name>2</name>
        <sequence type="described" ref="VSP_030448"/>
    </isoform>
</comment>
<comment type="domain">
    <text evidence="7">All members of the FAM83 family of proteins share a conserved N-terminal DUF1669 (domain of unknown function 1669) domain of about 300 amino acids. This domain mediates the interaction with casein kinase 1 (CK1) isoforms. Therefore, it has been proposed to rename DUF1669 the polypeptide anchor of CK1 domain.</text>
</comment>
<comment type="similarity">
    <text evidence="6">Belongs to the FAM83 family.</text>
</comment>
<feature type="initiator methionine" description="Removed" evidence="8">
    <location>
        <position position="1"/>
    </location>
</feature>
<feature type="chain" id="PRO_0000314950" description="Protein FAM83F">
    <location>
        <begin position="2"/>
        <end position="500"/>
    </location>
</feature>
<feature type="region of interest" description="DUF1669" evidence="7">
    <location>
        <begin position="2"/>
        <end position="300"/>
    </location>
</feature>
<feature type="region of interest" description="Disordered" evidence="2">
    <location>
        <begin position="82"/>
        <end position="109"/>
    </location>
</feature>
<feature type="region of interest" description="Disordered" evidence="2">
    <location>
        <begin position="347"/>
        <end position="366"/>
    </location>
</feature>
<feature type="region of interest" description="Disordered" evidence="2">
    <location>
        <begin position="391"/>
        <end position="500"/>
    </location>
</feature>
<feature type="compositionally biased region" description="Basic and acidic residues" evidence="2">
    <location>
        <begin position="397"/>
        <end position="419"/>
    </location>
</feature>
<feature type="compositionally biased region" description="Low complexity" evidence="2">
    <location>
        <begin position="425"/>
        <end position="442"/>
    </location>
</feature>
<feature type="compositionally biased region" description="Low complexity" evidence="2">
    <location>
        <begin position="458"/>
        <end position="468"/>
    </location>
</feature>
<feature type="compositionally biased region" description="Polar residues" evidence="2">
    <location>
        <begin position="477"/>
        <end position="500"/>
    </location>
</feature>
<feature type="modified residue" description="N-acetylalanine" evidence="8">
    <location>
        <position position="2"/>
    </location>
</feature>
<feature type="modified residue" description="Phosphoserine" evidence="8">
    <location>
        <position position="4"/>
    </location>
</feature>
<feature type="modified residue" description="Phosphoserine" evidence="1">
    <location>
        <position position="479"/>
    </location>
</feature>
<feature type="splice variant" id="VSP_030448" description="In isoform 2." evidence="5">
    <location>
        <begin position="1"/>
        <end position="168"/>
    </location>
</feature>
<feature type="sequence variant" id="VAR_038134" description="In dbSNP:rs12330063.">
    <original>R</original>
    <variation>S</variation>
    <location>
        <position position="245"/>
    </location>
</feature>
<feature type="sequence variant" id="VAR_038135" description="In dbSNP:rs35823589.">
    <original>G</original>
    <variation>S</variation>
    <location>
        <position position="353"/>
    </location>
</feature>
<feature type="sequence variant" id="VAR_038136" description="In a breast cancer sample; somatic mutation; dbSNP:rs2067523550." evidence="3">
    <original>A</original>
    <variation>V</variation>
    <location>
        <position position="418"/>
    </location>
</feature>
<feature type="sequence variant" id="VAR_038137" description="In dbSNP:rs5995794.">
    <original>R</original>
    <variation>G</variation>
    <location>
        <position position="436"/>
    </location>
</feature>
<feature type="mutagenesis site" description="Decreased interaction with CSNK1A1." evidence="4">
    <original>D</original>
    <variation>A</variation>
    <location>
        <position position="250"/>
    </location>
</feature>
<feature type="mutagenesis site" description="Decreased interaction with CSNK1A1." evidence="4">
    <original>F</original>
    <variation>A</variation>
    <location>
        <position position="284"/>
    </location>
</feature>
<feature type="sequence conflict" description="In Ref. 3; AAH11204." evidence="6" ref="3">
    <original>R</original>
    <variation>W</variation>
    <location>
        <position position="349"/>
    </location>
</feature>
<reference key="1">
    <citation type="journal article" date="1999" name="Nature">
        <title>The DNA sequence of human chromosome 22.</title>
        <authorList>
            <person name="Dunham I."/>
            <person name="Hunt A.R."/>
            <person name="Collins J.E."/>
            <person name="Bruskiewich R."/>
            <person name="Beare D.M."/>
            <person name="Clamp M."/>
            <person name="Smink L.J."/>
            <person name="Ainscough R."/>
            <person name="Almeida J.P."/>
            <person name="Babbage A.K."/>
            <person name="Bagguley C."/>
            <person name="Bailey J."/>
            <person name="Barlow K.F."/>
            <person name="Bates K.N."/>
            <person name="Beasley O.P."/>
            <person name="Bird C.P."/>
            <person name="Blakey S.E."/>
            <person name="Bridgeman A.M."/>
            <person name="Buck D."/>
            <person name="Burgess J."/>
            <person name="Burrill W.D."/>
            <person name="Burton J."/>
            <person name="Carder C."/>
            <person name="Carter N.P."/>
            <person name="Chen Y."/>
            <person name="Clark G."/>
            <person name="Clegg S.M."/>
            <person name="Cobley V.E."/>
            <person name="Cole C.G."/>
            <person name="Collier R.E."/>
            <person name="Connor R."/>
            <person name="Conroy D."/>
            <person name="Corby N.R."/>
            <person name="Coville G.J."/>
            <person name="Cox A.V."/>
            <person name="Davis J."/>
            <person name="Dawson E."/>
            <person name="Dhami P.D."/>
            <person name="Dockree C."/>
            <person name="Dodsworth S.J."/>
            <person name="Durbin R.M."/>
            <person name="Ellington A.G."/>
            <person name="Evans K.L."/>
            <person name="Fey J.M."/>
            <person name="Fleming K."/>
            <person name="French L."/>
            <person name="Garner A.A."/>
            <person name="Gilbert J.G.R."/>
            <person name="Goward M.E."/>
            <person name="Grafham D.V."/>
            <person name="Griffiths M.N.D."/>
            <person name="Hall C."/>
            <person name="Hall R.E."/>
            <person name="Hall-Tamlyn G."/>
            <person name="Heathcott R.W."/>
            <person name="Ho S."/>
            <person name="Holmes S."/>
            <person name="Hunt S.E."/>
            <person name="Jones M.C."/>
            <person name="Kershaw J."/>
            <person name="Kimberley A.M."/>
            <person name="King A."/>
            <person name="Laird G.K."/>
            <person name="Langford C.F."/>
            <person name="Leversha M.A."/>
            <person name="Lloyd C."/>
            <person name="Lloyd D.M."/>
            <person name="Martyn I.D."/>
            <person name="Mashreghi-Mohammadi M."/>
            <person name="Matthews L.H."/>
            <person name="Mccann O.T."/>
            <person name="Mcclay J."/>
            <person name="Mclaren S."/>
            <person name="McMurray A.A."/>
            <person name="Milne S.A."/>
            <person name="Mortimore B.J."/>
            <person name="Odell C.N."/>
            <person name="Pavitt R."/>
            <person name="Pearce A.V."/>
            <person name="Pearson D."/>
            <person name="Phillimore B.J.C.T."/>
            <person name="Phillips S.H."/>
            <person name="Plumb R.W."/>
            <person name="Ramsay H."/>
            <person name="Ramsey Y."/>
            <person name="Rogers L."/>
            <person name="Ross M.T."/>
            <person name="Scott C.E."/>
            <person name="Sehra H.K."/>
            <person name="Skuce C.D."/>
            <person name="Smalley S."/>
            <person name="Smith M.L."/>
            <person name="Soderlund C."/>
            <person name="Spragon L."/>
            <person name="Steward C.A."/>
            <person name="Sulston J.E."/>
            <person name="Swann R.M."/>
            <person name="Vaudin M."/>
            <person name="Wall M."/>
            <person name="Wallis J.M."/>
            <person name="Whiteley M.N."/>
            <person name="Willey D.L."/>
            <person name="Williams L."/>
            <person name="Williams S.A."/>
            <person name="Williamson H."/>
            <person name="Wilmer T.E."/>
            <person name="Wilming L."/>
            <person name="Wright C.L."/>
            <person name="Hubbard T."/>
            <person name="Bentley D.R."/>
            <person name="Beck S."/>
            <person name="Rogers J."/>
            <person name="Shimizu N."/>
            <person name="Minoshima S."/>
            <person name="Kawasaki K."/>
            <person name="Sasaki T."/>
            <person name="Asakawa S."/>
            <person name="Kudoh J."/>
            <person name="Shintani A."/>
            <person name="Shibuya K."/>
            <person name="Yoshizaki Y."/>
            <person name="Aoki N."/>
            <person name="Mitsuyama S."/>
            <person name="Roe B.A."/>
            <person name="Chen F."/>
            <person name="Chu L."/>
            <person name="Crabtree J."/>
            <person name="Deschamps S."/>
            <person name="Do A."/>
            <person name="Do T."/>
            <person name="Dorman A."/>
            <person name="Fang F."/>
            <person name="Fu Y."/>
            <person name="Hu P."/>
            <person name="Hua A."/>
            <person name="Kenton S."/>
            <person name="Lai H."/>
            <person name="Lao H.I."/>
            <person name="Lewis J."/>
            <person name="Lewis S."/>
            <person name="Lin S.-P."/>
            <person name="Loh P."/>
            <person name="Malaj E."/>
            <person name="Nguyen T."/>
            <person name="Pan H."/>
            <person name="Phan S."/>
            <person name="Qi S."/>
            <person name="Qian Y."/>
            <person name="Ray L."/>
            <person name="Ren Q."/>
            <person name="Shaull S."/>
            <person name="Sloan D."/>
            <person name="Song L."/>
            <person name="Wang Q."/>
            <person name="Wang Y."/>
            <person name="Wang Z."/>
            <person name="White J."/>
            <person name="Willingham D."/>
            <person name="Wu H."/>
            <person name="Yao Z."/>
            <person name="Zhan M."/>
            <person name="Zhang G."/>
            <person name="Chissoe S."/>
            <person name="Murray J."/>
            <person name="Miller N."/>
            <person name="Minx P."/>
            <person name="Fulton R."/>
            <person name="Johnson D."/>
            <person name="Bemis G."/>
            <person name="Bentley D."/>
            <person name="Bradshaw H."/>
            <person name="Bourne S."/>
            <person name="Cordes M."/>
            <person name="Du Z."/>
            <person name="Fulton L."/>
            <person name="Goela D."/>
            <person name="Graves T."/>
            <person name="Hawkins J."/>
            <person name="Hinds K."/>
            <person name="Kemp K."/>
            <person name="Latreille P."/>
            <person name="Layman D."/>
            <person name="Ozersky P."/>
            <person name="Rohlfing T."/>
            <person name="Scheet P."/>
            <person name="Walker C."/>
            <person name="Wamsley A."/>
            <person name="Wohldmann P."/>
            <person name="Pepin K."/>
            <person name="Nelson J."/>
            <person name="Korf I."/>
            <person name="Bedell J.A."/>
            <person name="Hillier L.W."/>
            <person name="Mardis E."/>
            <person name="Waterston R."/>
            <person name="Wilson R."/>
            <person name="Emanuel B.S."/>
            <person name="Shaikh T."/>
            <person name="Kurahashi H."/>
            <person name="Saitta S."/>
            <person name="Budarf M.L."/>
            <person name="McDermid H.E."/>
            <person name="Johnson A."/>
            <person name="Wong A.C.C."/>
            <person name="Morrow B.E."/>
            <person name="Edelmann L."/>
            <person name="Kim U.J."/>
            <person name="Shizuya H."/>
            <person name="Simon M.I."/>
            <person name="Dumanski J.P."/>
            <person name="Peyrard M."/>
            <person name="Kedra D."/>
            <person name="Seroussi E."/>
            <person name="Fransson I."/>
            <person name="Tapia I."/>
            <person name="Bruder C.E."/>
            <person name="O'Brien K.P."/>
            <person name="Wilkinson P."/>
            <person name="Bodenteich A."/>
            <person name="Hartman K."/>
            <person name="Hu X."/>
            <person name="Khan A.S."/>
            <person name="Lane L."/>
            <person name="Tilahun Y."/>
            <person name="Wright H."/>
        </authorList>
    </citation>
    <scope>NUCLEOTIDE SEQUENCE [LARGE SCALE GENOMIC DNA]</scope>
</reference>
<reference key="2">
    <citation type="submission" date="2005-07" db="EMBL/GenBank/DDBJ databases">
        <authorList>
            <person name="Mural R.J."/>
            <person name="Istrail S."/>
            <person name="Sutton G.G."/>
            <person name="Florea L."/>
            <person name="Halpern A.L."/>
            <person name="Mobarry C.M."/>
            <person name="Lippert R."/>
            <person name="Walenz B."/>
            <person name="Shatkay H."/>
            <person name="Dew I."/>
            <person name="Miller J.R."/>
            <person name="Flanigan M.J."/>
            <person name="Edwards N.J."/>
            <person name="Bolanos R."/>
            <person name="Fasulo D."/>
            <person name="Halldorsson B.V."/>
            <person name="Hannenhalli S."/>
            <person name="Turner R."/>
            <person name="Yooseph S."/>
            <person name="Lu F."/>
            <person name="Nusskern D.R."/>
            <person name="Shue B.C."/>
            <person name="Zheng X.H."/>
            <person name="Zhong F."/>
            <person name="Delcher A.L."/>
            <person name="Huson D.H."/>
            <person name="Kravitz S.A."/>
            <person name="Mouchard L."/>
            <person name="Reinert K."/>
            <person name="Remington K.A."/>
            <person name="Clark A.G."/>
            <person name="Waterman M.S."/>
            <person name="Eichler E.E."/>
            <person name="Adams M.D."/>
            <person name="Hunkapiller M.W."/>
            <person name="Myers E.W."/>
            <person name="Venter J.C."/>
        </authorList>
    </citation>
    <scope>NUCLEOTIDE SEQUENCE [LARGE SCALE GENOMIC DNA]</scope>
</reference>
<reference key="3">
    <citation type="journal article" date="2004" name="Genome Res.">
        <title>The status, quality, and expansion of the NIH full-length cDNA project: the Mammalian Gene Collection (MGC).</title>
        <authorList>
            <consortium name="The MGC Project Team"/>
        </authorList>
    </citation>
    <scope>NUCLEOTIDE SEQUENCE [LARGE SCALE MRNA] (ISOFORMS 1 AND 2)</scope>
    <source>
        <tissue>Cervix</tissue>
        <tissue>Testis</tissue>
    </source>
</reference>
<reference key="4">
    <citation type="journal article" date="2011" name="Sci. Signal.">
        <title>System-wide temporal characterization of the proteome and phosphoproteome of human embryonic stem cell differentiation.</title>
        <authorList>
            <person name="Rigbolt K.T."/>
            <person name="Prokhorova T.A."/>
            <person name="Akimov V."/>
            <person name="Henningsen J."/>
            <person name="Johansen P.T."/>
            <person name="Kratchmarova I."/>
            <person name="Kassem M."/>
            <person name="Mann M."/>
            <person name="Olsen J.V."/>
            <person name="Blagoev B."/>
        </authorList>
    </citation>
    <scope>ACETYLATION [LARGE SCALE ANALYSIS] AT ALA-2</scope>
    <scope>PHOSPHORYLATION [LARGE SCALE ANALYSIS] AT SER-4</scope>
    <scope>CLEAVAGE OF INITIATOR METHIONINE [LARGE SCALE ANALYSIS]</scope>
    <scope>IDENTIFICATION BY MASS SPECTROMETRY [LARGE SCALE ANALYSIS]</scope>
</reference>
<reference key="5">
    <citation type="journal article" date="2018" name="Sci. Signal.">
        <title>The DUF1669 domain of FAM83 family proteins anchor casein kinase 1 isoforms.</title>
        <authorList>
            <person name="Fulcher L.J."/>
            <person name="Bozatzi P."/>
            <person name="Tachie-Menson T."/>
            <person name="Wu K.Z.L."/>
            <person name="Cummins T.D."/>
            <person name="Bufton J.C."/>
            <person name="Pinkas D.M."/>
            <person name="Dunbar K."/>
            <person name="Shrestha S."/>
            <person name="Wood N.T."/>
            <person name="Weidlich S."/>
            <person name="Macartney T.J."/>
            <person name="Varghese J."/>
            <person name="Gourlay R."/>
            <person name="Campbell D.G."/>
            <person name="Dingwell K.S."/>
            <person name="Smith J.C."/>
            <person name="Bullock A.N."/>
            <person name="Sapkota G.P."/>
        </authorList>
    </citation>
    <scope>INTERACTION WITH CSNK1A1 AND CSNK1A1L</scope>
    <scope>MUTAGENESIS OF ASP-250 AND PHE-284</scope>
</reference>
<reference key="6">
    <citation type="journal article" date="2006" name="Science">
        <title>The consensus coding sequences of human breast and colorectal cancers.</title>
        <authorList>
            <person name="Sjoeblom T."/>
            <person name="Jones S."/>
            <person name="Wood L.D."/>
            <person name="Parsons D.W."/>
            <person name="Lin J."/>
            <person name="Barber T.D."/>
            <person name="Mandelker D."/>
            <person name="Leary R.J."/>
            <person name="Ptak J."/>
            <person name="Silliman N."/>
            <person name="Szabo S."/>
            <person name="Buckhaults P."/>
            <person name="Farrell C."/>
            <person name="Meeh P."/>
            <person name="Markowitz S.D."/>
            <person name="Willis J."/>
            <person name="Dawson D."/>
            <person name="Willson J.K.V."/>
            <person name="Gazdar A.F."/>
            <person name="Hartigan J."/>
            <person name="Wu L."/>
            <person name="Liu C."/>
            <person name="Parmigiani G."/>
            <person name="Park B.H."/>
            <person name="Bachman K.E."/>
            <person name="Papadopoulos N."/>
            <person name="Vogelstein B."/>
            <person name="Kinzler K.W."/>
            <person name="Velculescu V.E."/>
        </authorList>
    </citation>
    <scope>VARIANT [LARGE SCALE ANALYSIS] VAL-418</scope>
</reference>
<protein>
    <recommendedName>
        <fullName>Protein FAM83F</fullName>
    </recommendedName>
</protein>
<evidence type="ECO:0000250" key="1">
    <source>
        <dbReference type="UniProtKB" id="Q3UKU4"/>
    </source>
</evidence>
<evidence type="ECO:0000256" key="2">
    <source>
        <dbReference type="SAM" id="MobiDB-lite"/>
    </source>
</evidence>
<evidence type="ECO:0000269" key="3">
    <source>
    </source>
</evidence>
<evidence type="ECO:0000269" key="4">
    <source>
    </source>
</evidence>
<evidence type="ECO:0000303" key="5">
    <source>
    </source>
</evidence>
<evidence type="ECO:0000305" key="6"/>
<evidence type="ECO:0000305" key="7">
    <source>
    </source>
</evidence>
<evidence type="ECO:0007744" key="8">
    <source>
    </source>
</evidence>
<keyword id="KW-0007">Acetylation</keyword>
<keyword id="KW-0025">Alternative splicing</keyword>
<keyword id="KW-1003">Cell membrane</keyword>
<keyword id="KW-0472">Membrane</keyword>
<keyword id="KW-0597">Phosphoprotein</keyword>
<keyword id="KW-1267">Proteomics identification</keyword>
<keyword id="KW-1185">Reference proteome</keyword>
<name>FA83F_HUMAN</name>